<dbReference type="EC" id="3.4.21.53" evidence="1"/>
<dbReference type="EMBL" id="CP000109">
    <property type="protein sequence ID" value="ABB41774.1"/>
    <property type="molecule type" value="Genomic_DNA"/>
</dbReference>
<dbReference type="SMR" id="Q31GE9"/>
<dbReference type="STRING" id="317025.Tcr_1179"/>
<dbReference type="MEROPS" id="S16.001"/>
<dbReference type="KEGG" id="tcx:Tcr_1179"/>
<dbReference type="eggNOG" id="COG0466">
    <property type="taxonomic scope" value="Bacteria"/>
</dbReference>
<dbReference type="HOGENOM" id="CLU_004109_4_3_6"/>
<dbReference type="OrthoDB" id="9803599at2"/>
<dbReference type="GO" id="GO:0005737">
    <property type="term" value="C:cytoplasm"/>
    <property type="evidence" value="ECO:0007669"/>
    <property type="project" value="UniProtKB-SubCell"/>
</dbReference>
<dbReference type="GO" id="GO:0005524">
    <property type="term" value="F:ATP binding"/>
    <property type="evidence" value="ECO:0007669"/>
    <property type="project" value="UniProtKB-UniRule"/>
</dbReference>
<dbReference type="GO" id="GO:0016887">
    <property type="term" value="F:ATP hydrolysis activity"/>
    <property type="evidence" value="ECO:0007669"/>
    <property type="project" value="UniProtKB-UniRule"/>
</dbReference>
<dbReference type="GO" id="GO:0004176">
    <property type="term" value="F:ATP-dependent peptidase activity"/>
    <property type="evidence" value="ECO:0007669"/>
    <property type="project" value="UniProtKB-UniRule"/>
</dbReference>
<dbReference type="GO" id="GO:0043565">
    <property type="term" value="F:sequence-specific DNA binding"/>
    <property type="evidence" value="ECO:0007669"/>
    <property type="project" value="UniProtKB-UniRule"/>
</dbReference>
<dbReference type="GO" id="GO:0004252">
    <property type="term" value="F:serine-type endopeptidase activity"/>
    <property type="evidence" value="ECO:0007669"/>
    <property type="project" value="UniProtKB-UniRule"/>
</dbReference>
<dbReference type="GO" id="GO:0034605">
    <property type="term" value="P:cellular response to heat"/>
    <property type="evidence" value="ECO:0007669"/>
    <property type="project" value="UniProtKB-UniRule"/>
</dbReference>
<dbReference type="GO" id="GO:0006515">
    <property type="term" value="P:protein quality control for misfolded or incompletely synthesized proteins"/>
    <property type="evidence" value="ECO:0007669"/>
    <property type="project" value="UniProtKB-UniRule"/>
</dbReference>
<dbReference type="CDD" id="cd19500">
    <property type="entry name" value="RecA-like_Lon"/>
    <property type="match status" value="1"/>
</dbReference>
<dbReference type="FunFam" id="3.30.230.10:FF:000010">
    <property type="entry name" value="Lon protease"/>
    <property type="match status" value="1"/>
</dbReference>
<dbReference type="FunFam" id="1.20.5.5270:FF:000002">
    <property type="entry name" value="Lon protease homolog"/>
    <property type="match status" value="1"/>
</dbReference>
<dbReference type="FunFam" id="3.40.50.300:FF:000021">
    <property type="entry name" value="Lon protease homolog"/>
    <property type="match status" value="1"/>
</dbReference>
<dbReference type="Gene3D" id="1.10.8.60">
    <property type="match status" value="1"/>
</dbReference>
<dbReference type="Gene3D" id="1.20.5.5270">
    <property type="match status" value="1"/>
</dbReference>
<dbReference type="Gene3D" id="1.20.58.1480">
    <property type="match status" value="1"/>
</dbReference>
<dbReference type="Gene3D" id="3.30.230.10">
    <property type="match status" value="1"/>
</dbReference>
<dbReference type="Gene3D" id="2.30.130.40">
    <property type="entry name" value="LON domain-like"/>
    <property type="match status" value="1"/>
</dbReference>
<dbReference type="Gene3D" id="3.40.50.300">
    <property type="entry name" value="P-loop containing nucleotide triphosphate hydrolases"/>
    <property type="match status" value="1"/>
</dbReference>
<dbReference type="HAMAP" id="MF_01973">
    <property type="entry name" value="lon_bact"/>
    <property type="match status" value="1"/>
</dbReference>
<dbReference type="InterPro" id="IPR003593">
    <property type="entry name" value="AAA+_ATPase"/>
</dbReference>
<dbReference type="InterPro" id="IPR003959">
    <property type="entry name" value="ATPase_AAA_core"/>
</dbReference>
<dbReference type="InterPro" id="IPR027543">
    <property type="entry name" value="Lon_bac"/>
</dbReference>
<dbReference type="InterPro" id="IPR004815">
    <property type="entry name" value="Lon_bac/euk-typ"/>
</dbReference>
<dbReference type="InterPro" id="IPR054594">
    <property type="entry name" value="Lon_lid"/>
</dbReference>
<dbReference type="InterPro" id="IPR008269">
    <property type="entry name" value="Lon_proteolytic"/>
</dbReference>
<dbReference type="InterPro" id="IPR027065">
    <property type="entry name" value="Lon_Prtase"/>
</dbReference>
<dbReference type="InterPro" id="IPR003111">
    <property type="entry name" value="Lon_prtase_N"/>
</dbReference>
<dbReference type="InterPro" id="IPR046336">
    <property type="entry name" value="Lon_prtase_N_sf"/>
</dbReference>
<dbReference type="InterPro" id="IPR027417">
    <property type="entry name" value="P-loop_NTPase"/>
</dbReference>
<dbReference type="InterPro" id="IPR008268">
    <property type="entry name" value="Peptidase_S16_AS"/>
</dbReference>
<dbReference type="InterPro" id="IPR015947">
    <property type="entry name" value="PUA-like_sf"/>
</dbReference>
<dbReference type="InterPro" id="IPR020568">
    <property type="entry name" value="Ribosomal_Su5_D2-typ_SF"/>
</dbReference>
<dbReference type="InterPro" id="IPR014721">
    <property type="entry name" value="Ribsml_uS5_D2-typ_fold_subgr"/>
</dbReference>
<dbReference type="NCBIfam" id="TIGR00763">
    <property type="entry name" value="lon"/>
    <property type="match status" value="1"/>
</dbReference>
<dbReference type="NCBIfam" id="NF008053">
    <property type="entry name" value="PRK10787.1"/>
    <property type="match status" value="1"/>
</dbReference>
<dbReference type="PANTHER" id="PTHR10046">
    <property type="entry name" value="ATP DEPENDENT LON PROTEASE FAMILY MEMBER"/>
    <property type="match status" value="1"/>
</dbReference>
<dbReference type="Pfam" id="PF00004">
    <property type="entry name" value="AAA"/>
    <property type="match status" value="1"/>
</dbReference>
<dbReference type="Pfam" id="PF05362">
    <property type="entry name" value="Lon_C"/>
    <property type="match status" value="1"/>
</dbReference>
<dbReference type="Pfam" id="PF22667">
    <property type="entry name" value="Lon_lid"/>
    <property type="match status" value="1"/>
</dbReference>
<dbReference type="Pfam" id="PF02190">
    <property type="entry name" value="LON_substr_bdg"/>
    <property type="match status" value="1"/>
</dbReference>
<dbReference type="PIRSF" id="PIRSF001174">
    <property type="entry name" value="Lon_proteas"/>
    <property type="match status" value="1"/>
</dbReference>
<dbReference type="PRINTS" id="PR00830">
    <property type="entry name" value="ENDOLAPTASE"/>
</dbReference>
<dbReference type="SMART" id="SM00382">
    <property type="entry name" value="AAA"/>
    <property type="match status" value="1"/>
</dbReference>
<dbReference type="SMART" id="SM00464">
    <property type="entry name" value="LON"/>
    <property type="match status" value="1"/>
</dbReference>
<dbReference type="SUPFAM" id="SSF52540">
    <property type="entry name" value="P-loop containing nucleoside triphosphate hydrolases"/>
    <property type="match status" value="1"/>
</dbReference>
<dbReference type="SUPFAM" id="SSF88697">
    <property type="entry name" value="PUA domain-like"/>
    <property type="match status" value="1"/>
</dbReference>
<dbReference type="SUPFAM" id="SSF54211">
    <property type="entry name" value="Ribosomal protein S5 domain 2-like"/>
    <property type="match status" value="1"/>
</dbReference>
<dbReference type="PROSITE" id="PS51787">
    <property type="entry name" value="LON_N"/>
    <property type="match status" value="1"/>
</dbReference>
<dbReference type="PROSITE" id="PS51786">
    <property type="entry name" value="LON_PROTEOLYTIC"/>
    <property type="match status" value="1"/>
</dbReference>
<dbReference type="PROSITE" id="PS01046">
    <property type="entry name" value="LON_SER"/>
    <property type="match status" value="1"/>
</dbReference>
<comment type="function">
    <text evidence="1">ATP-dependent serine protease that mediates the selective degradation of mutant and abnormal proteins as well as certain short-lived regulatory proteins. Required for cellular homeostasis and for survival from DNA damage and developmental changes induced by stress. Degrades polypeptides processively to yield small peptide fragments that are 5 to 10 amino acids long. Binds to DNA in a double-stranded, site-specific manner.</text>
</comment>
<comment type="catalytic activity">
    <reaction evidence="1">
        <text>Hydrolysis of proteins in presence of ATP.</text>
        <dbReference type="EC" id="3.4.21.53"/>
    </reaction>
</comment>
<comment type="subunit">
    <text evidence="1">Homohexamer. Organized in a ring with a central cavity.</text>
</comment>
<comment type="subcellular location">
    <subcellularLocation>
        <location evidence="1">Cytoplasm</location>
    </subcellularLocation>
</comment>
<comment type="induction">
    <text evidence="1">By heat shock.</text>
</comment>
<comment type="similarity">
    <text evidence="1">Belongs to the peptidase S16 family.</text>
</comment>
<evidence type="ECO:0000255" key="1">
    <source>
        <dbReference type="HAMAP-Rule" id="MF_01973"/>
    </source>
</evidence>
<evidence type="ECO:0000255" key="2">
    <source>
        <dbReference type="PROSITE-ProRule" id="PRU01122"/>
    </source>
</evidence>
<evidence type="ECO:0000255" key="3">
    <source>
        <dbReference type="PROSITE-ProRule" id="PRU01123"/>
    </source>
</evidence>
<name>LON1_HYDCU</name>
<proteinExistence type="inferred from homology"/>
<accession>Q31GE9</accession>
<protein>
    <recommendedName>
        <fullName evidence="1">Lon protease 1</fullName>
        <ecNumber evidence="1">3.4.21.53</ecNumber>
    </recommendedName>
    <alternativeName>
        <fullName evidence="1">ATP-dependent protease La 1</fullName>
    </alternativeName>
</protein>
<gene>
    <name evidence="1" type="primary">lon1</name>
    <name type="ordered locus">Tcr_1179</name>
</gene>
<keyword id="KW-0067">ATP-binding</keyword>
<keyword id="KW-0963">Cytoplasm</keyword>
<keyword id="KW-0378">Hydrolase</keyword>
<keyword id="KW-0547">Nucleotide-binding</keyword>
<keyword id="KW-0645">Protease</keyword>
<keyword id="KW-0720">Serine protease</keyword>
<keyword id="KW-0346">Stress response</keyword>
<organism>
    <name type="scientific">Hydrogenovibrio crunogenus (strain DSM 25203 / XCL-2)</name>
    <name type="common">Thiomicrospira crunogena</name>
    <dbReference type="NCBI Taxonomy" id="317025"/>
    <lineage>
        <taxon>Bacteria</taxon>
        <taxon>Pseudomonadati</taxon>
        <taxon>Pseudomonadota</taxon>
        <taxon>Gammaproteobacteria</taxon>
        <taxon>Thiotrichales</taxon>
        <taxon>Piscirickettsiaceae</taxon>
        <taxon>Hydrogenovibrio</taxon>
    </lineage>
</organism>
<reference key="1">
    <citation type="journal article" date="2006" name="PLoS Biol.">
        <title>The genome of deep-sea vent chemolithoautotroph Thiomicrospira crunogena XCL-2.</title>
        <authorList>
            <person name="Scott K.M."/>
            <person name="Sievert S.M."/>
            <person name="Abril F.N."/>
            <person name="Ball L.A."/>
            <person name="Barrett C.J."/>
            <person name="Blake R.A."/>
            <person name="Boller A.J."/>
            <person name="Chain P.S.G."/>
            <person name="Clark J.A."/>
            <person name="Davis C.R."/>
            <person name="Detter C."/>
            <person name="Do K.F."/>
            <person name="Dobrinski K.P."/>
            <person name="Faza B.I."/>
            <person name="Fitzpatrick K.A."/>
            <person name="Freyermuth S.K."/>
            <person name="Harmer T.L."/>
            <person name="Hauser L.J."/>
            <person name="Huegler M."/>
            <person name="Kerfeld C.A."/>
            <person name="Klotz M.G."/>
            <person name="Kong W.W."/>
            <person name="Land M."/>
            <person name="Lapidus A."/>
            <person name="Larimer F.W."/>
            <person name="Longo D.L."/>
            <person name="Lucas S."/>
            <person name="Malfatti S.A."/>
            <person name="Massey S.E."/>
            <person name="Martin D.D."/>
            <person name="McCuddin Z."/>
            <person name="Meyer F."/>
            <person name="Moore J.L."/>
            <person name="Ocampo L.H. Jr."/>
            <person name="Paul J.H."/>
            <person name="Paulsen I.T."/>
            <person name="Reep D.K."/>
            <person name="Ren Q."/>
            <person name="Ross R.L."/>
            <person name="Sato P.Y."/>
            <person name="Thomas P."/>
            <person name="Tinkham L.E."/>
            <person name="Zeruth G.T."/>
        </authorList>
    </citation>
    <scope>NUCLEOTIDE SEQUENCE [LARGE SCALE GENOMIC DNA]</scope>
    <source>
        <strain>DSM 25203 / XCL-2</strain>
    </source>
</reference>
<feature type="chain" id="PRO_0000396613" description="Lon protease 1">
    <location>
        <begin position="1"/>
        <end position="815"/>
    </location>
</feature>
<feature type="domain" description="Lon N-terminal" evidence="3">
    <location>
        <begin position="12"/>
        <end position="205"/>
    </location>
</feature>
<feature type="domain" description="Lon proteolytic" evidence="2">
    <location>
        <begin position="594"/>
        <end position="775"/>
    </location>
</feature>
<feature type="active site" evidence="1">
    <location>
        <position position="681"/>
    </location>
</feature>
<feature type="active site" evidence="1">
    <location>
        <position position="724"/>
    </location>
</feature>
<feature type="binding site" evidence="1">
    <location>
        <begin position="358"/>
        <end position="365"/>
    </location>
    <ligand>
        <name>ATP</name>
        <dbReference type="ChEBI" id="CHEBI:30616"/>
    </ligand>
</feature>
<sequence length="815" mass="91130">MDIDQIEFKTNVFVLALRDVVVFPGMVVPLFVGRPKSMNALNAAMKEDKQIFLVTQKNATEETPTIDNLYQTGVMANILQLLKLPDGTLKVLVEGVKRFELLALNDEENFLTGDIQQVESDEQLDNDGVVLVRTIQERFQDYAALKKKIPSEVLKSVQKITDPNRLVDTISANLKLGIEEKQTLLEILTINDRLEHILKTIETEIDLLESEQRINSRVKKKMDQTQRNFYLNTKLQAIHEELGDSSEDGVSEFTRLKEQIEQAGMTKDALKVAEDELKKLKMMSPQSPEANIIRTYIEWLVSIPWKKRSRVSKDLNKAQTILDKQHYGLEKVKERIIEYLAVQKRVNKMKGPILCLVGPPGVGKTSLARSIAEATNRKYVRMSLGGVRDEAEIRGHRKTYLGALPGRVIQKMKTAGTRNPLFLLDEIDKMARDLRGDPASALLEVLDPEQNKAFNDHYLEVDYDLSDVMFVATSNSMDIPEALLDRMEIIDLAGYTENEKLNIATQHLLPREIKEHGLKQGELEVPSDTILKIIQTYTREAGVRLLDQSLAKICRKSLKEIVTNEAKAPITVTPDTLDKYLGVAKYRFGLADETNQIGQVAGLAWTRVGGDLLRIEATAMPGKGKNTSTGQLGSVMQESTQAAMSVIRSRSKELGLPDDFYEKQDVHLHFPEGAIKKDGPSAGIAICTAIASVLTQIPVRSDVAMTGEITLRGEVLPIGGLKEKLLAAARGGIKTVLIPYENVRDLAEISDEVKEGLDIHPVQWIDEVFKIALESFPNVENDEISAISMKDAEMGKLVANKQSTKEIQKKSPKRH</sequence>